<proteinExistence type="evidence at protein level"/>
<protein>
    <recommendedName>
        <fullName>D-inositol 3-phosphate glycosyltransferase</fullName>
        <ecNumber evidence="2">2.4.1.250</ecNumber>
    </recommendedName>
    <alternativeName>
        <fullName evidence="2">N-acetylglucosamine-inositol-phosphate N-acetylglucosaminyltransferase</fullName>
        <shortName evidence="2">GlcNAc-Ins-P N-acetylglucosaminyltransferase</shortName>
    </alternativeName>
</protein>
<sequence length="480" mass="50541">MAGVRHDDGSGLIAQRRPVRGEGATRSRGPSGPSNRNVSAADDPRRVALLAVHTSPLAQPGTGDAGGMNVYMLQSALHLARRGIEVEIFTRATASADPPVVRVAPGVLVRNVVAGPFEGLDKYDLPTQLCAFAAGVLRAEAVHEPGYYDIVHSHYWLSGQVGWLARDRWAVPLVHTAHTLAAVKNAALADGDGPEPPLRTVGEQQVVDEADRLIVNTDDEARQVISLHGADPARIDVVHPGVDLDVFRPGDRRAARAALGLPVDERVVAFVGRIQPLKAPDIVLRAAAKLPGVRIIVAGGPSGSGLASPDGLVRLADELGISARVTFLPPQSHTDLATLFRAADLVAVPSYSESFGLVAVEAQACGTPVVAAAVGGLPVAVRDGITGTLVSGHEVGQWADAIDHLLRLCAGPRGRVMSRAAARHAATFSWENTTDALLASYRRAIGEYNAERQRRGGEVISDLVAVGKPRHWTPRRGVGA</sequence>
<reference key="1">
    <citation type="journal article" date="1998" name="Nature">
        <title>Deciphering the biology of Mycobacterium tuberculosis from the complete genome sequence.</title>
        <authorList>
            <person name="Cole S.T."/>
            <person name="Brosch R."/>
            <person name="Parkhill J."/>
            <person name="Garnier T."/>
            <person name="Churcher C.M."/>
            <person name="Harris D.E."/>
            <person name="Gordon S.V."/>
            <person name="Eiglmeier K."/>
            <person name="Gas S."/>
            <person name="Barry C.E. III"/>
            <person name="Tekaia F."/>
            <person name="Badcock K."/>
            <person name="Basham D."/>
            <person name="Brown D."/>
            <person name="Chillingworth T."/>
            <person name="Connor R."/>
            <person name="Davies R.M."/>
            <person name="Devlin K."/>
            <person name="Feltwell T."/>
            <person name="Gentles S."/>
            <person name="Hamlin N."/>
            <person name="Holroyd S."/>
            <person name="Hornsby T."/>
            <person name="Jagels K."/>
            <person name="Krogh A."/>
            <person name="McLean J."/>
            <person name="Moule S."/>
            <person name="Murphy L.D."/>
            <person name="Oliver S."/>
            <person name="Osborne J."/>
            <person name="Quail M.A."/>
            <person name="Rajandream M.A."/>
            <person name="Rogers J."/>
            <person name="Rutter S."/>
            <person name="Seeger K."/>
            <person name="Skelton S."/>
            <person name="Squares S."/>
            <person name="Squares R."/>
            <person name="Sulston J.E."/>
            <person name="Taylor K."/>
            <person name="Whitehead S."/>
            <person name="Barrell B.G."/>
        </authorList>
    </citation>
    <scope>NUCLEOTIDE SEQUENCE [LARGE SCALE GENOMIC DNA]</scope>
    <source>
        <strain>ATCC 25618 / H37Rv</strain>
    </source>
</reference>
<reference key="2">
    <citation type="journal article" date="2003" name="J. Bacteriol.">
        <title>The glycosyltransferase gene encoding the enzyme catalyzing the first step of mycothiol biosynthesis (mshA).</title>
        <authorList>
            <person name="Newton G.L."/>
            <person name="Koledin T."/>
            <person name="Gorovitz B."/>
            <person name="Rawat M."/>
            <person name="Fahey R.C."/>
            <person name="Av-Gay Y."/>
        </authorList>
    </citation>
    <scope>FUNCTION</scope>
    <source>
        <strain>ATCC 25618 / H37Rv</strain>
    </source>
</reference>
<reference key="3">
    <citation type="journal article" date="2011" name="Mol. Cell. Proteomics">
        <title>Proteogenomic analysis of Mycobacterium tuberculosis by high resolution mass spectrometry.</title>
        <authorList>
            <person name="Kelkar D.S."/>
            <person name="Kumar D."/>
            <person name="Kumar P."/>
            <person name="Balakrishnan L."/>
            <person name="Muthusamy B."/>
            <person name="Yadav A.K."/>
            <person name="Shrivastava P."/>
            <person name="Marimuthu A."/>
            <person name="Anand S."/>
            <person name="Sundaram H."/>
            <person name="Kingsbury R."/>
            <person name="Harsha H.C."/>
            <person name="Nair B."/>
            <person name="Prasad T.S."/>
            <person name="Chauhan D.S."/>
            <person name="Katoch K."/>
            <person name="Katoch V.M."/>
            <person name="Kumar P."/>
            <person name="Chaerkady R."/>
            <person name="Ramachandran S."/>
            <person name="Dash D."/>
            <person name="Pandey A."/>
        </authorList>
    </citation>
    <scope>IDENTIFICATION BY MASS SPECTROMETRY [LARGE SCALE ANALYSIS]</scope>
    <source>
        <strain>ATCC 25618 / H37Rv</strain>
    </source>
</reference>
<reference key="4">
    <citation type="journal article" date="2016" name="Cell Rep.">
        <title>Ergothioneine maintains redox and bioenergetic homeostasis essential for drug susceptibility and virulence of Mycobacterium tuberculosis.</title>
        <authorList>
            <person name="Saini V."/>
            <person name="Cumming B.M."/>
            <person name="Guidry L."/>
            <person name="Lamprecht D.A."/>
            <person name="Adamson J.H."/>
            <person name="Reddy V.P."/>
            <person name="Chinta K.C."/>
            <person name="Mazorodze J.H."/>
            <person name="Glasgow J.N."/>
            <person name="Richard-Greenblatt M."/>
            <person name="Gomez-Velasco A."/>
            <person name="Bach H."/>
            <person name="Av-Gay Y."/>
            <person name="Eoh H."/>
            <person name="Rhee K."/>
            <person name="Steyn A.J."/>
        </authorList>
    </citation>
    <scope>FUNCTION</scope>
    <scope>DISRUPTION PHENOTYPE</scope>
</reference>
<reference key="5">
    <citation type="journal article" date="2016" name="J. Biol. Chem.">
        <title>Mycobacterium tuberculosis WhiB3 responds to vacuolar pH-induced changes in mycothiol redox potential to modulate phagosomal maturation and virulence.</title>
        <authorList>
            <person name="Mehta M."/>
            <person name="Rajmani R.S."/>
            <person name="Singh A."/>
        </authorList>
    </citation>
    <scope>FUNCTION</scope>
    <scope>DISRUPTION PHENOTYPE</scope>
</reference>
<evidence type="ECO:0000250" key="1"/>
<evidence type="ECO:0000255" key="2">
    <source>
        <dbReference type="HAMAP-Rule" id="MF_01695"/>
    </source>
</evidence>
<evidence type="ECO:0000256" key="3">
    <source>
        <dbReference type="SAM" id="MobiDB-lite"/>
    </source>
</evidence>
<evidence type="ECO:0000269" key="4">
    <source>
    </source>
</evidence>
<evidence type="ECO:0000269" key="5">
    <source>
    </source>
</evidence>
<evidence type="ECO:0000269" key="6">
    <source>
    </source>
</evidence>
<evidence type="ECO:0000303" key="7">
    <source>
    </source>
</evidence>
<evidence type="ECO:0000305" key="8"/>
<evidence type="ECO:0000305" key="9">
    <source>
    </source>
</evidence>
<evidence type="ECO:0000305" key="10">
    <source>
    </source>
</evidence>
<comment type="function">
    <text evidence="4 9 10">Catalyzes the transfer of an N-acetyl-glucosamine moiety to 1D-myo-inositol 3-phosphate to produce 1D-myo-inositol 2-acetamido-2-deoxy-glucopyranoside 3-phosphate in the mycothiol (MSH) biosynthesis pathway (PubMed:12754249). MSH and WhiB3 are probably part of a regulatory circuit that mediates gene expression upon acid stress (like that found in host macrophage phagosomes) (PubMed:26637353). MSH is one of the major redox buffers which protects bacteria against redox stressors and antibiotics; loss of MSH or ergothioneine (ERG, the other major redox buffer in this bacteria) leads to respiratory alterations and bioenergetic deficiencies that negatively impact virulence (PubMed:26774486).</text>
</comment>
<comment type="catalytic activity">
    <reaction evidence="2">
        <text>1D-myo-inositol 3-phosphate + UDP-N-acetyl-alpha-D-glucosamine = 1D-myo-inositol 2-acetamido-2-deoxy-alpha-D-glucopyranoside 3-phosphate + UDP + H(+)</text>
        <dbReference type="Rhea" id="RHEA:26188"/>
        <dbReference type="ChEBI" id="CHEBI:15378"/>
        <dbReference type="ChEBI" id="CHEBI:57705"/>
        <dbReference type="ChEBI" id="CHEBI:58223"/>
        <dbReference type="ChEBI" id="CHEBI:58401"/>
        <dbReference type="ChEBI" id="CHEBI:58892"/>
        <dbReference type="EC" id="2.4.1.250"/>
    </reaction>
</comment>
<comment type="subunit">
    <text evidence="2">Homodimer.</text>
</comment>
<comment type="disruption phenotype">
    <text evidence="5 6">Increased intracellular levels of ergothioneine, 8-fold increase in reactive oxygen species-producing cells, decreased resistance to the antibiotics rifampicin, isoniazid, bedaquiline and clofazimine (PubMed:26774486). Increased oxygen consumption and extracellular acidification rates, which are further increased by membrane uncoupler CCCP, indicative of electron chain dysfunction in the absence of MSH (PubMed:26774486). Absence leads to alteration of transcript levels for 139 genes which probably compensate for loss of redox control (PubMed:26774486). Loss of induction of some pH-inducible genes at pH 4.5, including the redox-sensor whiB3 (PubMed:26637353).</text>
</comment>
<comment type="similarity">
    <text evidence="8">Belongs to the glycosyltransferase group 1 family. MshA subfamily.</text>
</comment>
<feature type="chain" id="PRO_0000080318" description="D-inositol 3-phosphate glycosyltransferase">
    <location>
        <begin position="1"/>
        <end position="480"/>
    </location>
</feature>
<feature type="region of interest" description="Disordered" evidence="3">
    <location>
        <begin position="1"/>
        <end position="42"/>
    </location>
</feature>
<feature type="binding site" evidence="2">
    <location>
        <position position="53"/>
    </location>
    <ligand>
        <name>1D-myo-inositol 3-phosphate</name>
        <dbReference type="ChEBI" id="CHEBI:58401"/>
    </ligand>
</feature>
<feature type="binding site" evidence="1">
    <location>
        <begin position="59"/>
        <end position="60"/>
    </location>
    <ligand>
        <name>UDP-N-acetyl-alpha-D-glucosamine</name>
        <dbReference type="ChEBI" id="CHEBI:57705"/>
    </ligand>
</feature>
<feature type="binding site" evidence="2">
    <location>
        <begin position="64"/>
        <end position="69"/>
    </location>
    <ligand>
        <name>1D-myo-inositol 3-phosphate</name>
        <dbReference type="ChEBI" id="CHEBI:58401"/>
    </ligand>
</feature>
<feature type="binding site" evidence="2">
    <location>
        <position position="67"/>
    </location>
    <ligand>
        <name>UDP-N-acetyl-alpha-D-glucosamine</name>
        <dbReference type="ChEBI" id="CHEBI:57705"/>
    </ligand>
</feature>
<feature type="binding site" evidence="2">
    <location>
        <position position="122"/>
    </location>
    <ligand>
        <name>1D-myo-inositol 3-phosphate</name>
        <dbReference type="ChEBI" id="CHEBI:58401"/>
    </ligand>
</feature>
<feature type="binding site" evidence="2">
    <location>
        <position position="155"/>
    </location>
    <ligand>
        <name>1D-myo-inositol 3-phosphate</name>
        <dbReference type="ChEBI" id="CHEBI:58401"/>
    </ligand>
</feature>
<feature type="binding site" evidence="2">
    <location>
        <position position="179"/>
    </location>
    <ligand>
        <name>1D-myo-inositol 3-phosphate</name>
        <dbReference type="ChEBI" id="CHEBI:58401"/>
    </ligand>
</feature>
<feature type="binding site" evidence="2">
    <location>
        <position position="199"/>
    </location>
    <ligand>
        <name>1D-myo-inositol 3-phosphate</name>
        <dbReference type="ChEBI" id="CHEBI:58401"/>
    </ligand>
</feature>
<feature type="binding site" evidence="2">
    <location>
        <position position="273"/>
    </location>
    <ligand>
        <name>UDP-N-acetyl-alpha-D-glucosamine</name>
        <dbReference type="ChEBI" id="CHEBI:57705"/>
    </ligand>
</feature>
<feature type="binding site" evidence="2">
    <location>
        <position position="278"/>
    </location>
    <ligand>
        <name>UDP-N-acetyl-alpha-D-glucosamine</name>
        <dbReference type="ChEBI" id="CHEBI:57705"/>
    </ligand>
</feature>
<feature type="binding site" evidence="2">
    <location>
        <position position="331"/>
    </location>
    <ligand>
        <name>UDP-N-acetyl-alpha-D-glucosamine</name>
        <dbReference type="ChEBI" id="CHEBI:57705"/>
    </ligand>
</feature>
<feature type="binding site" evidence="2">
    <location>
        <position position="340"/>
    </location>
    <ligand>
        <name>Mg(2+)</name>
        <dbReference type="ChEBI" id="CHEBI:18420"/>
    </ligand>
</feature>
<feature type="binding site" evidence="2">
    <location>
        <position position="341"/>
    </location>
    <ligand>
        <name>Mg(2+)</name>
        <dbReference type="ChEBI" id="CHEBI:18420"/>
    </ligand>
</feature>
<feature type="binding site" evidence="2">
    <location>
        <position position="343"/>
    </location>
    <ligand>
        <name>Mg(2+)</name>
        <dbReference type="ChEBI" id="CHEBI:18420"/>
    </ligand>
</feature>
<feature type="binding site" evidence="2">
    <location>
        <position position="353"/>
    </location>
    <ligand>
        <name>UDP-N-acetyl-alpha-D-glucosamine</name>
        <dbReference type="ChEBI" id="CHEBI:57705"/>
    </ligand>
</feature>
<feature type="binding site" evidence="2">
    <location>
        <position position="361"/>
    </location>
    <ligand>
        <name>UDP-N-acetyl-alpha-D-glucosamine</name>
        <dbReference type="ChEBI" id="CHEBI:57705"/>
    </ligand>
</feature>
<feature type="binding site" evidence="2">
    <location>
        <position position="367"/>
    </location>
    <ligand>
        <name>Mg(2+)</name>
        <dbReference type="ChEBI" id="CHEBI:18420"/>
    </ligand>
</feature>
<organism>
    <name type="scientific">Mycobacterium tuberculosis (strain ATCC 25618 / H37Rv)</name>
    <dbReference type="NCBI Taxonomy" id="83332"/>
    <lineage>
        <taxon>Bacteria</taxon>
        <taxon>Bacillati</taxon>
        <taxon>Actinomycetota</taxon>
        <taxon>Actinomycetes</taxon>
        <taxon>Mycobacteriales</taxon>
        <taxon>Mycobacteriaceae</taxon>
        <taxon>Mycobacterium</taxon>
        <taxon>Mycobacterium tuberculosis complex</taxon>
    </lineage>
</organism>
<name>MSHA_MYCTU</name>
<accession>P9WMY7</accession>
<accession>L0T3R4</accession>
<accession>P64707</accession>
<accession>Q11152</accession>
<dbReference type="EC" id="2.4.1.250" evidence="2"/>
<dbReference type="EMBL" id="AL123456">
    <property type="protein sequence ID" value="CCP43220.1"/>
    <property type="molecule type" value="Genomic_DNA"/>
</dbReference>
<dbReference type="PIR" id="A70744">
    <property type="entry name" value="A70744"/>
</dbReference>
<dbReference type="RefSeq" id="NP_215000.1">
    <property type="nucleotide sequence ID" value="NC_000962.3"/>
</dbReference>
<dbReference type="RefSeq" id="WP_003402367.1">
    <property type="nucleotide sequence ID" value="NZ_NVQJ01000002.1"/>
</dbReference>
<dbReference type="SMR" id="P9WMY7"/>
<dbReference type="FunCoup" id="P9WMY7">
    <property type="interactions" value="49"/>
</dbReference>
<dbReference type="STRING" id="83332.Rv0486"/>
<dbReference type="PaxDb" id="83332-Rv0486"/>
<dbReference type="DNASU" id="887160"/>
<dbReference type="GeneID" id="887160"/>
<dbReference type="KEGG" id="mtu:Rv0486"/>
<dbReference type="KEGG" id="mtv:RVBD_0486"/>
<dbReference type="PATRIC" id="fig|83332.111.peg.533"/>
<dbReference type="TubercuList" id="Rv0486"/>
<dbReference type="eggNOG" id="COG0438">
    <property type="taxonomic scope" value="Bacteria"/>
</dbReference>
<dbReference type="InParanoid" id="P9WMY7"/>
<dbReference type="OrthoDB" id="9810929at2"/>
<dbReference type="PhylomeDB" id="P9WMY7"/>
<dbReference type="Reactome" id="R-MTU-879299">
    <property type="pathway name" value="Mycothiol biosynthesis"/>
</dbReference>
<dbReference type="Proteomes" id="UP000001584">
    <property type="component" value="Chromosome"/>
</dbReference>
<dbReference type="GO" id="GO:0005829">
    <property type="term" value="C:cytosol"/>
    <property type="evidence" value="ECO:0000304"/>
    <property type="project" value="Reactome"/>
</dbReference>
<dbReference type="GO" id="GO:0008375">
    <property type="term" value="F:acetylglucosaminyltransferase activity"/>
    <property type="evidence" value="ECO:0000314"/>
    <property type="project" value="MTBBASE"/>
</dbReference>
<dbReference type="GO" id="GO:0102710">
    <property type="term" value="F:D-inositol-3-phosphate glycosyltransferase activity"/>
    <property type="evidence" value="ECO:0007669"/>
    <property type="project" value="UniProtKB-EC"/>
</dbReference>
<dbReference type="GO" id="GO:0016757">
    <property type="term" value="F:glycosyltransferase activity"/>
    <property type="evidence" value="ECO:0000318"/>
    <property type="project" value="GO_Central"/>
</dbReference>
<dbReference type="GO" id="GO:0000287">
    <property type="term" value="F:magnesium ion binding"/>
    <property type="evidence" value="ECO:0007669"/>
    <property type="project" value="UniProtKB-UniRule"/>
</dbReference>
<dbReference type="GO" id="GO:0010125">
    <property type="term" value="P:mycothiol biosynthetic process"/>
    <property type="evidence" value="ECO:0000315"/>
    <property type="project" value="MTBBASE"/>
</dbReference>
<dbReference type="CDD" id="cd03800">
    <property type="entry name" value="GT4_sucrose_synthase"/>
    <property type="match status" value="1"/>
</dbReference>
<dbReference type="FunFam" id="3.40.50.2000:FF:000265">
    <property type="entry name" value="D-inositol 3-phosphate glycosyltransferase"/>
    <property type="match status" value="1"/>
</dbReference>
<dbReference type="FunFam" id="3.40.50.2000:FF:000123">
    <property type="entry name" value="D-inositol-3-phosphate glycosyltransferase"/>
    <property type="match status" value="1"/>
</dbReference>
<dbReference type="Gene3D" id="3.40.50.2000">
    <property type="entry name" value="Glycogen Phosphorylase B"/>
    <property type="match status" value="2"/>
</dbReference>
<dbReference type="HAMAP" id="MF_01695">
    <property type="entry name" value="MshA"/>
    <property type="match status" value="1"/>
</dbReference>
<dbReference type="InterPro" id="IPR001296">
    <property type="entry name" value="Glyco_trans_1"/>
</dbReference>
<dbReference type="InterPro" id="IPR028098">
    <property type="entry name" value="Glyco_trans_4-like_N"/>
</dbReference>
<dbReference type="InterPro" id="IPR017814">
    <property type="entry name" value="Mycothiol_biosynthesis_MshA"/>
</dbReference>
<dbReference type="NCBIfam" id="TIGR03449">
    <property type="entry name" value="mycothiol_MshA"/>
    <property type="match status" value="1"/>
</dbReference>
<dbReference type="PANTHER" id="PTHR12526:SF510">
    <property type="entry name" value="D-INOSITOL 3-PHOSPHATE GLYCOSYLTRANSFERASE"/>
    <property type="match status" value="1"/>
</dbReference>
<dbReference type="PANTHER" id="PTHR12526">
    <property type="entry name" value="GLYCOSYLTRANSFERASE"/>
    <property type="match status" value="1"/>
</dbReference>
<dbReference type="Pfam" id="PF13579">
    <property type="entry name" value="Glyco_trans_4_4"/>
    <property type="match status" value="1"/>
</dbReference>
<dbReference type="Pfam" id="PF00534">
    <property type="entry name" value="Glycos_transf_1"/>
    <property type="match status" value="1"/>
</dbReference>
<dbReference type="SUPFAM" id="SSF53756">
    <property type="entry name" value="UDP-Glycosyltransferase/glycogen phosphorylase"/>
    <property type="match status" value="1"/>
</dbReference>
<keyword id="KW-0328">Glycosyltransferase</keyword>
<keyword id="KW-0460">Magnesium</keyword>
<keyword id="KW-0479">Metal-binding</keyword>
<keyword id="KW-1185">Reference proteome</keyword>
<keyword id="KW-0808">Transferase</keyword>
<gene>
    <name evidence="2 7" type="primary">mshA</name>
    <name type="ordered locus">Rv0486</name>
    <name type="ORF">MTCY20G9.12</name>
</gene>